<reference key="1">
    <citation type="submission" date="2008-06" db="EMBL/GenBank/DDBJ databases">
        <title>Lactobacillus casei BL23 complete genome sequence.</title>
        <authorList>
            <person name="Maze A."/>
            <person name="Boel G."/>
            <person name="Bourand A."/>
            <person name="Loux V."/>
            <person name="Gibrat J.F."/>
            <person name="Zuniga M."/>
            <person name="Hartke A."/>
            <person name="Deutscher J."/>
        </authorList>
    </citation>
    <scope>NUCLEOTIDE SEQUENCE [LARGE SCALE GENOMIC DNA]</scope>
    <source>
        <strain>BL23</strain>
    </source>
</reference>
<name>SYC_LACCB</name>
<protein>
    <recommendedName>
        <fullName evidence="1">Cysteine--tRNA ligase</fullName>
        <ecNumber evidence="1">6.1.1.16</ecNumber>
    </recommendedName>
    <alternativeName>
        <fullName evidence="1">Cysteinyl-tRNA synthetase</fullName>
        <shortName evidence="1">CysRS</shortName>
    </alternativeName>
</protein>
<comment type="catalytic activity">
    <reaction evidence="1">
        <text>tRNA(Cys) + L-cysteine + ATP = L-cysteinyl-tRNA(Cys) + AMP + diphosphate</text>
        <dbReference type="Rhea" id="RHEA:17773"/>
        <dbReference type="Rhea" id="RHEA-COMP:9661"/>
        <dbReference type="Rhea" id="RHEA-COMP:9679"/>
        <dbReference type="ChEBI" id="CHEBI:30616"/>
        <dbReference type="ChEBI" id="CHEBI:33019"/>
        <dbReference type="ChEBI" id="CHEBI:35235"/>
        <dbReference type="ChEBI" id="CHEBI:78442"/>
        <dbReference type="ChEBI" id="CHEBI:78517"/>
        <dbReference type="ChEBI" id="CHEBI:456215"/>
        <dbReference type="EC" id="6.1.1.16"/>
    </reaction>
</comment>
<comment type="cofactor">
    <cofactor evidence="1">
        <name>Zn(2+)</name>
        <dbReference type="ChEBI" id="CHEBI:29105"/>
    </cofactor>
    <text evidence="1">Binds 1 zinc ion per subunit.</text>
</comment>
<comment type="subunit">
    <text evidence="1">Monomer.</text>
</comment>
<comment type="subcellular location">
    <subcellularLocation>
        <location evidence="1">Cytoplasm</location>
    </subcellularLocation>
</comment>
<comment type="similarity">
    <text evidence="1">Belongs to the class-I aminoacyl-tRNA synthetase family.</text>
</comment>
<proteinExistence type="inferred from homology"/>
<organism>
    <name type="scientific">Lacticaseibacillus casei (strain BL23)</name>
    <name type="common">Lactobacillus casei</name>
    <dbReference type="NCBI Taxonomy" id="543734"/>
    <lineage>
        <taxon>Bacteria</taxon>
        <taxon>Bacillati</taxon>
        <taxon>Bacillota</taxon>
        <taxon>Bacilli</taxon>
        <taxon>Lactobacillales</taxon>
        <taxon>Lactobacillaceae</taxon>
        <taxon>Lacticaseibacillus</taxon>
    </lineage>
</organism>
<keyword id="KW-0030">Aminoacyl-tRNA synthetase</keyword>
<keyword id="KW-0067">ATP-binding</keyword>
<keyword id="KW-0963">Cytoplasm</keyword>
<keyword id="KW-0436">Ligase</keyword>
<keyword id="KW-0479">Metal-binding</keyword>
<keyword id="KW-0547">Nucleotide-binding</keyword>
<keyword id="KW-0648">Protein biosynthesis</keyword>
<keyword id="KW-0862">Zinc</keyword>
<dbReference type="EC" id="6.1.1.16" evidence="1"/>
<dbReference type="EMBL" id="FM177140">
    <property type="protein sequence ID" value="CAQ67554.1"/>
    <property type="molecule type" value="Genomic_DNA"/>
</dbReference>
<dbReference type="SMR" id="B3WA35"/>
<dbReference type="KEGG" id="lcb:LCABL_24880"/>
<dbReference type="HOGENOM" id="CLU_013528_0_1_9"/>
<dbReference type="GO" id="GO:0005829">
    <property type="term" value="C:cytosol"/>
    <property type="evidence" value="ECO:0007669"/>
    <property type="project" value="TreeGrafter"/>
</dbReference>
<dbReference type="GO" id="GO:0005524">
    <property type="term" value="F:ATP binding"/>
    <property type="evidence" value="ECO:0007669"/>
    <property type="project" value="UniProtKB-UniRule"/>
</dbReference>
<dbReference type="GO" id="GO:0004817">
    <property type="term" value="F:cysteine-tRNA ligase activity"/>
    <property type="evidence" value="ECO:0007669"/>
    <property type="project" value="UniProtKB-UniRule"/>
</dbReference>
<dbReference type="GO" id="GO:0008270">
    <property type="term" value="F:zinc ion binding"/>
    <property type="evidence" value="ECO:0007669"/>
    <property type="project" value="UniProtKB-UniRule"/>
</dbReference>
<dbReference type="GO" id="GO:0006423">
    <property type="term" value="P:cysteinyl-tRNA aminoacylation"/>
    <property type="evidence" value="ECO:0007669"/>
    <property type="project" value="UniProtKB-UniRule"/>
</dbReference>
<dbReference type="CDD" id="cd00672">
    <property type="entry name" value="CysRS_core"/>
    <property type="match status" value="1"/>
</dbReference>
<dbReference type="FunFam" id="3.40.50.620:FF:000009">
    <property type="entry name" value="Cysteine--tRNA ligase"/>
    <property type="match status" value="1"/>
</dbReference>
<dbReference type="Gene3D" id="1.20.120.1910">
    <property type="entry name" value="Cysteine-tRNA ligase, C-terminal anti-codon recognition domain"/>
    <property type="match status" value="1"/>
</dbReference>
<dbReference type="Gene3D" id="3.40.50.620">
    <property type="entry name" value="HUPs"/>
    <property type="match status" value="1"/>
</dbReference>
<dbReference type="HAMAP" id="MF_00041">
    <property type="entry name" value="Cys_tRNA_synth"/>
    <property type="match status" value="1"/>
</dbReference>
<dbReference type="InterPro" id="IPR015803">
    <property type="entry name" value="Cys-tRNA-ligase"/>
</dbReference>
<dbReference type="InterPro" id="IPR015273">
    <property type="entry name" value="Cys-tRNA-synt_Ia_DALR"/>
</dbReference>
<dbReference type="InterPro" id="IPR024909">
    <property type="entry name" value="Cys-tRNA/MSH_ligase"/>
</dbReference>
<dbReference type="InterPro" id="IPR056411">
    <property type="entry name" value="CysS_C"/>
</dbReference>
<dbReference type="InterPro" id="IPR014729">
    <property type="entry name" value="Rossmann-like_a/b/a_fold"/>
</dbReference>
<dbReference type="InterPro" id="IPR032678">
    <property type="entry name" value="tRNA-synt_1_cat_dom"/>
</dbReference>
<dbReference type="InterPro" id="IPR009080">
    <property type="entry name" value="tRNAsynth_Ia_anticodon-bd"/>
</dbReference>
<dbReference type="NCBIfam" id="TIGR00435">
    <property type="entry name" value="cysS"/>
    <property type="match status" value="1"/>
</dbReference>
<dbReference type="PANTHER" id="PTHR10890:SF3">
    <property type="entry name" value="CYSTEINE--TRNA LIGASE, CYTOPLASMIC"/>
    <property type="match status" value="1"/>
</dbReference>
<dbReference type="PANTHER" id="PTHR10890">
    <property type="entry name" value="CYSTEINYL-TRNA SYNTHETASE"/>
    <property type="match status" value="1"/>
</dbReference>
<dbReference type="Pfam" id="PF23493">
    <property type="entry name" value="CysS_C"/>
    <property type="match status" value="1"/>
</dbReference>
<dbReference type="Pfam" id="PF09190">
    <property type="entry name" value="DALR_2"/>
    <property type="match status" value="1"/>
</dbReference>
<dbReference type="Pfam" id="PF01406">
    <property type="entry name" value="tRNA-synt_1e"/>
    <property type="match status" value="1"/>
</dbReference>
<dbReference type="PRINTS" id="PR00983">
    <property type="entry name" value="TRNASYNTHCYS"/>
</dbReference>
<dbReference type="SMART" id="SM00840">
    <property type="entry name" value="DALR_2"/>
    <property type="match status" value="1"/>
</dbReference>
<dbReference type="SUPFAM" id="SSF47323">
    <property type="entry name" value="Anticodon-binding domain of a subclass of class I aminoacyl-tRNA synthetases"/>
    <property type="match status" value="1"/>
</dbReference>
<dbReference type="SUPFAM" id="SSF52374">
    <property type="entry name" value="Nucleotidylyl transferase"/>
    <property type="match status" value="1"/>
</dbReference>
<feature type="chain" id="PRO_1000090849" description="Cysteine--tRNA ligase">
    <location>
        <begin position="1"/>
        <end position="468"/>
    </location>
</feature>
<feature type="short sequence motif" description="'HIGH' region">
    <location>
        <begin position="30"/>
        <end position="40"/>
    </location>
</feature>
<feature type="short sequence motif" description="'KMSKS' region">
    <location>
        <begin position="271"/>
        <end position="275"/>
    </location>
</feature>
<feature type="binding site" evidence="1">
    <location>
        <position position="28"/>
    </location>
    <ligand>
        <name>Zn(2+)</name>
        <dbReference type="ChEBI" id="CHEBI:29105"/>
    </ligand>
</feature>
<feature type="binding site" evidence="1">
    <location>
        <position position="212"/>
    </location>
    <ligand>
        <name>Zn(2+)</name>
        <dbReference type="ChEBI" id="CHEBI:29105"/>
    </ligand>
</feature>
<feature type="binding site" evidence="1">
    <location>
        <position position="237"/>
    </location>
    <ligand>
        <name>Zn(2+)</name>
        <dbReference type="ChEBI" id="CHEBI:29105"/>
    </ligand>
</feature>
<feature type="binding site" evidence="1">
    <location>
        <position position="241"/>
    </location>
    <ligand>
        <name>Zn(2+)</name>
        <dbReference type="ChEBI" id="CHEBI:29105"/>
    </ligand>
</feature>
<feature type="binding site" evidence="1">
    <location>
        <position position="274"/>
    </location>
    <ligand>
        <name>ATP</name>
        <dbReference type="ChEBI" id="CHEBI:30616"/>
    </ligand>
</feature>
<evidence type="ECO:0000255" key="1">
    <source>
        <dbReference type="HAMAP-Rule" id="MF_00041"/>
    </source>
</evidence>
<accession>B3WA35</accession>
<gene>
    <name evidence="1" type="primary">cysS</name>
    <name type="ordered locus">LCABL_24880</name>
</gene>
<sequence>MLTLYNTMSRKKETFTPLHPGEIRMYVCGPTVYNYIHIGNARSAIAFDTIRRYFEYRGYKVTYVSNFTDVDDKIINAAHKTGEAPLDLAQRFIDAFMEDTTALGIEPATAHPRASQMIPDIIEFVQDLIDKEYAYAVDGDVYYRARKFKHYGELSHQNVDELEEGASQHITQDELAKKEDPIDFALWKAAKPGEISWESPWGKGRPGWHIECSVMSTKLLGDTFDIHGGGQDLEFPHHENEIAQSEAKTDKQFVRYWMHNGFVTIGEDDEKMSKSLGNFITVHDIRKTVDPQVLRFFMAGTQYRMPIRYSETNLKNAANSLNRLKIARENLTYRRRGAETGVDPQITKQLQTLKDRFVTAMDDDINVQNGLTVLFDLAKLLNEYANEETVKSESINDLLNEYDAWLQIFGVVFADQKSLDADIDALVKARDAARAAKDFAKSDQIRDQLAAQGIILEDTPQGTRWRRQ</sequence>